<dbReference type="EMBL" id="AL445067">
    <property type="protein sequence ID" value="CAC12390.1"/>
    <property type="molecule type" value="Genomic_DNA"/>
</dbReference>
<dbReference type="SMR" id="Q9HIR4"/>
<dbReference type="FunCoup" id="Q9HIR4">
    <property type="interactions" value="160"/>
</dbReference>
<dbReference type="STRING" id="273075.gene:9572489"/>
<dbReference type="PaxDb" id="273075-Ta1266"/>
<dbReference type="EnsemblBacteria" id="CAC12390">
    <property type="protein sequence ID" value="CAC12390"/>
    <property type="gene ID" value="CAC12390"/>
</dbReference>
<dbReference type="KEGG" id="tac:Ta1266"/>
<dbReference type="eggNOG" id="arCOG04098">
    <property type="taxonomic scope" value="Archaea"/>
</dbReference>
<dbReference type="HOGENOM" id="CLU_083987_0_2_2"/>
<dbReference type="InParanoid" id="Q9HIR4"/>
<dbReference type="Proteomes" id="UP000001024">
    <property type="component" value="Chromosome"/>
</dbReference>
<dbReference type="GO" id="GO:0022625">
    <property type="term" value="C:cytosolic large ribosomal subunit"/>
    <property type="evidence" value="ECO:0007669"/>
    <property type="project" value="TreeGrafter"/>
</dbReference>
<dbReference type="GO" id="GO:0019843">
    <property type="term" value="F:rRNA binding"/>
    <property type="evidence" value="ECO:0007669"/>
    <property type="project" value="UniProtKB-UniRule"/>
</dbReference>
<dbReference type="GO" id="GO:0003735">
    <property type="term" value="F:structural constituent of ribosome"/>
    <property type="evidence" value="ECO:0007669"/>
    <property type="project" value="InterPro"/>
</dbReference>
<dbReference type="GO" id="GO:0002181">
    <property type="term" value="P:cytoplasmic translation"/>
    <property type="evidence" value="ECO:0007669"/>
    <property type="project" value="TreeGrafter"/>
</dbReference>
<dbReference type="Gene3D" id="3.90.470.10">
    <property type="entry name" value="Ribosomal protein L22/L17"/>
    <property type="match status" value="1"/>
</dbReference>
<dbReference type="HAMAP" id="MF_01331_A">
    <property type="entry name" value="Ribosomal_uL22_A"/>
    <property type="match status" value="1"/>
</dbReference>
<dbReference type="InterPro" id="IPR001063">
    <property type="entry name" value="Ribosomal_uL22"/>
</dbReference>
<dbReference type="InterPro" id="IPR005721">
    <property type="entry name" value="Ribosomal_uL22_euk/arc"/>
</dbReference>
<dbReference type="InterPro" id="IPR036394">
    <property type="entry name" value="Ribosomal_uL22_sf"/>
</dbReference>
<dbReference type="NCBIfam" id="NF003260">
    <property type="entry name" value="PRK04223.1"/>
    <property type="match status" value="1"/>
</dbReference>
<dbReference type="NCBIfam" id="TIGR01038">
    <property type="entry name" value="uL22_arch_euk"/>
    <property type="match status" value="1"/>
</dbReference>
<dbReference type="PANTHER" id="PTHR11593">
    <property type="entry name" value="60S RIBOSOMAL PROTEIN L17"/>
    <property type="match status" value="1"/>
</dbReference>
<dbReference type="PANTHER" id="PTHR11593:SF10">
    <property type="entry name" value="60S RIBOSOMAL PROTEIN L17"/>
    <property type="match status" value="1"/>
</dbReference>
<dbReference type="Pfam" id="PF00237">
    <property type="entry name" value="Ribosomal_L22"/>
    <property type="match status" value="1"/>
</dbReference>
<dbReference type="SUPFAM" id="SSF54843">
    <property type="entry name" value="Ribosomal protein L22"/>
    <property type="match status" value="1"/>
</dbReference>
<sequence length="151" mass="16881">MIIMKGYSMEIEGNHAKARIREADISLKDSVNIAHHLRGMPLSRAKEIIDAVINKTYAIPYFRYLDSVSHRPGVGPGRYPVKAAKAFKQLLENVENNAEFKGLNTDNLVIKHIAANKGRMIKKYTPKAYGRAGANFKDLINLEIIVTEGSE</sequence>
<evidence type="ECO:0000255" key="1">
    <source>
        <dbReference type="HAMAP-Rule" id="MF_01331"/>
    </source>
</evidence>
<evidence type="ECO:0000305" key="2"/>
<name>RL22_THEAC</name>
<comment type="function">
    <text evidence="1">This protein binds specifically to 23S rRNA. It makes multiple contacts with different domains of the 23S rRNA in the assembled 50S subunit and ribosome.</text>
</comment>
<comment type="function">
    <text evidence="1">The globular domain of the protein is located near the polypeptide exit tunnel on the outside of the subunit, while an extended beta-hairpin is found that lines the wall of the exit tunnel in the center of the 70S ribosome.</text>
</comment>
<comment type="subunit">
    <text evidence="1">Part of the 50S ribosomal subunit.</text>
</comment>
<comment type="similarity">
    <text evidence="1">Belongs to the universal ribosomal protein uL22 family.</text>
</comment>
<proteinExistence type="inferred from homology"/>
<feature type="chain" id="PRO_0000125290" description="Large ribosomal subunit protein uL22">
    <location>
        <begin position="1"/>
        <end position="151"/>
    </location>
</feature>
<reference key="1">
    <citation type="journal article" date="2000" name="Nature">
        <title>The genome sequence of the thermoacidophilic scavenger Thermoplasma acidophilum.</title>
        <authorList>
            <person name="Ruepp A."/>
            <person name="Graml W."/>
            <person name="Santos-Martinez M.-L."/>
            <person name="Koretke K.K."/>
            <person name="Volker C."/>
            <person name="Mewes H.-W."/>
            <person name="Frishman D."/>
            <person name="Stocker S."/>
            <person name="Lupas A.N."/>
            <person name="Baumeister W."/>
        </authorList>
    </citation>
    <scope>NUCLEOTIDE SEQUENCE [LARGE SCALE GENOMIC DNA]</scope>
    <source>
        <strain>ATCC 25905 / DSM 1728 / JCM 9062 / NBRC 15155 / AMRC-C165</strain>
    </source>
</reference>
<gene>
    <name evidence="1" type="primary">rpl22</name>
    <name type="ordered locus">Ta1266</name>
</gene>
<keyword id="KW-1185">Reference proteome</keyword>
<keyword id="KW-0687">Ribonucleoprotein</keyword>
<keyword id="KW-0689">Ribosomal protein</keyword>
<keyword id="KW-0694">RNA-binding</keyword>
<keyword id="KW-0699">rRNA-binding</keyword>
<organism>
    <name type="scientific">Thermoplasma acidophilum (strain ATCC 25905 / DSM 1728 / JCM 9062 / NBRC 15155 / AMRC-C165)</name>
    <dbReference type="NCBI Taxonomy" id="273075"/>
    <lineage>
        <taxon>Archaea</taxon>
        <taxon>Methanobacteriati</taxon>
        <taxon>Thermoplasmatota</taxon>
        <taxon>Thermoplasmata</taxon>
        <taxon>Thermoplasmatales</taxon>
        <taxon>Thermoplasmataceae</taxon>
        <taxon>Thermoplasma</taxon>
    </lineage>
</organism>
<protein>
    <recommendedName>
        <fullName evidence="1">Large ribosomal subunit protein uL22</fullName>
    </recommendedName>
    <alternativeName>
        <fullName evidence="2">50S ribosomal protein L22</fullName>
    </alternativeName>
</protein>
<accession>Q9HIR4</accession>